<name>COPA_STAEQ</name>
<sequence>MANTTLTLDIIGMTCAACSNRIEKKLNRMNHVQAKVNLTTEKATIDYESDDYHLEDFVEQIQSLGYDVAVEQVELNINGMTCAACSNRIEKVLNQTQGVQQATVNLTTEQALIKYYPSATNTEALIKRIQNIGYDAETKTSSKAQSNRKKQELKHKRNKLIISAILSLPLLLVMVVHISPISIPSILVNPWVQLILSTPVQFIIGWQFYVGAYKNLRNGSANMDVLVAVGTSAAYFYSIYEMMMWLTHQTHHPHLYFETSAILITLILLGKYLEARAKSQTTNALSELLNLQAKEARVIKENKEIMLPLDKVKVGDTLLIKPGEKIPVDGKVTKGDTSIDESMLTGESIPVEKSSGDSVIGSTMNKNGSIMIEATQVGGDTALSHIIKVVEDAQSSKAPIQRLADIISGYFVPIVVSIAVITFIIWIIFVHPGQFEPALVSAISVLVIACPCALGLATPTSIMVGTGRAAENGILFKGGQFVERAHYVDTIVLDKTGTITNGQPVVTDYVGDNDTLQLLASAENASEHPLADAIVTYAKDKGLNLLDNDTFKSIPGHGIKATIHQQQILVGNRKLMNDYNISISNKLNDQLNHYEHLGQTAMMIAVDNQINGIIAVADTVKNDAKQAIKELRNMNIDVVMLTGDNNRTAQTIAKQVGIEHVIAEVLPEEKAHQISLLQDKGKQVAMVGDGINDAPALVKADIGMAIGTGAEVAIEAADITILGGDLLLVPKAIKASKATIKNIRQNLFWAFGYNVAGIPIAACGLLAPWIAGAAMALSSVSVVMNALRLKKMKL</sequence>
<gene>
    <name type="primary">copA</name>
    <name type="ordered locus">SERP2131</name>
</gene>
<evidence type="ECO:0000250" key="1"/>
<evidence type="ECO:0000255" key="2"/>
<evidence type="ECO:0000255" key="3">
    <source>
        <dbReference type="PROSITE-ProRule" id="PRU00280"/>
    </source>
</evidence>
<evidence type="ECO:0000305" key="4"/>
<reference key="1">
    <citation type="journal article" date="2005" name="J. Bacteriol.">
        <title>Insights on evolution of virulence and resistance from the complete genome analysis of an early methicillin-resistant Staphylococcus aureus strain and a biofilm-producing methicillin-resistant Staphylococcus epidermidis strain.</title>
        <authorList>
            <person name="Gill S.R."/>
            <person name="Fouts D.E."/>
            <person name="Archer G.L."/>
            <person name="Mongodin E.F."/>
            <person name="DeBoy R.T."/>
            <person name="Ravel J."/>
            <person name="Paulsen I.T."/>
            <person name="Kolonay J.F."/>
            <person name="Brinkac L.M."/>
            <person name="Beanan M.J."/>
            <person name="Dodson R.J."/>
            <person name="Daugherty S.C."/>
            <person name="Madupu R."/>
            <person name="Angiuoli S.V."/>
            <person name="Durkin A.S."/>
            <person name="Haft D.H."/>
            <person name="Vamathevan J.J."/>
            <person name="Khouri H."/>
            <person name="Utterback T.R."/>
            <person name="Lee C."/>
            <person name="Dimitrov G."/>
            <person name="Jiang L."/>
            <person name="Qin H."/>
            <person name="Weidman J."/>
            <person name="Tran K."/>
            <person name="Kang K.H."/>
            <person name="Hance I.R."/>
            <person name="Nelson K.E."/>
            <person name="Fraser C.M."/>
        </authorList>
    </citation>
    <scope>NUCLEOTIDE SEQUENCE [LARGE SCALE GENOMIC DNA]</scope>
    <source>
        <strain>ATCC 35984 / DSM 28319 / BCRC 17069 / CCUG 31568 / BM 3577 / RP62A</strain>
    </source>
</reference>
<keyword id="KW-0067">ATP-binding</keyword>
<keyword id="KW-1003">Cell membrane</keyword>
<keyword id="KW-0186">Copper</keyword>
<keyword id="KW-0187">Copper transport</keyword>
<keyword id="KW-0406">Ion transport</keyword>
<keyword id="KW-0460">Magnesium</keyword>
<keyword id="KW-0472">Membrane</keyword>
<keyword id="KW-0479">Metal-binding</keyword>
<keyword id="KW-0547">Nucleotide-binding</keyword>
<keyword id="KW-0597">Phosphoprotein</keyword>
<keyword id="KW-1185">Reference proteome</keyword>
<keyword id="KW-0677">Repeat</keyword>
<keyword id="KW-1278">Translocase</keyword>
<keyword id="KW-0812">Transmembrane</keyword>
<keyword id="KW-1133">Transmembrane helix</keyword>
<keyword id="KW-0813">Transport</keyword>
<accession>Q5HL56</accession>
<feature type="chain" id="PRO_0000350598" description="Copper-exporting P-type ATPase">
    <location>
        <begin position="1"/>
        <end position="794"/>
    </location>
</feature>
<feature type="transmembrane region" description="Helical" evidence="2">
    <location>
        <begin position="161"/>
        <end position="181"/>
    </location>
</feature>
<feature type="transmembrane region" description="Helical" evidence="2">
    <location>
        <begin position="186"/>
        <end position="206"/>
    </location>
</feature>
<feature type="transmembrane region" description="Helical" evidence="2">
    <location>
        <begin position="225"/>
        <end position="245"/>
    </location>
</feature>
<feature type="transmembrane region" description="Helical" evidence="2">
    <location>
        <begin position="255"/>
        <end position="275"/>
    </location>
</feature>
<feature type="transmembrane region" description="Helical" evidence="2">
    <location>
        <begin position="410"/>
        <end position="430"/>
    </location>
</feature>
<feature type="transmembrane region" description="Helical" evidence="2">
    <location>
        <begin position="437"/>
        <end position="457"/>
    </location>
</feature>
<feature type="transmembrane region" description="Helical" evidence="2">
    <location>
        <begin position="747"/>
        <end position="767"/>
    </location>
</feature>
<feature type="transmembrane region" description="Helical" evidence="2">
    <location>
        <begin position="773"/>
        <end position="789"/>
    </location>
</feature>
<feature type="domain" description="HMA 1" evidence="3">
    <location>
        <begin position="4"/>
        <end position="69"/>
    </location>
</feature>
<feature type="domain" description="HMA 2" evidence="3">
    <location>
        <begin position="71"/>
        <end position="137"/>
    </location>
</feature>
<feature type="active site" description="4-aspartylphosphate intermediate" evidence="1">
    <location>
        <position position="494"/>
    </location>
</feature>
<feature type="binding site" evidence="3">
    <location>
        <position position="15"/>
    </location>
    <ligand>
        <name>Cu(+)</name>
        <dbReference type="ChEBI" id="CHEBI:49552"/>
        <label>1</label>
    </ligand>
</feature>
<feature type="binding site" evidence="3">
    <location>
        <position position="18"/>
    </location>
    <ligand>
        <name>Cu(+)</name>
        <dbReference type="ChEBI" id="CHEBI:49552"/>
        <label>1</label>
    </ligand>
</feature>
<feature type="binding site" evidence="3">
    <location>
        <position position="82"/>
    </location>
    <ligand>
        <name>Cu(+)</name>
        <dbReference type="ChEBI" id="CHEBI:49552"/>
        <label>2</label>
    </ligand>
</feature>
<feature type="binding site" evidence="3">
    <location>
        <position position="85"/>
    </location>
    <ligand>
        <name>Cu(+)</name>
        <dbReference type="ChEBI" id="CHEBI:49552"/>
        <label>2</label>
    </ligand>
</feature>
<feature type="binding site">
    <location>
        <position position="689"/>
    </location>
    <ligand>
        <name>Mg(2+)</name>
        <dbReference type="ChEBI" id="CHEBI:18420"/>
    </ligand>
</feature>
<feature type="binding site">
    <location>
        <position position="693"/>
    </location>
    <ligand>
        <name>Mg(2+)</name>
        <dbReference type="ChEBI" id="CHEBI:18420"/>
    </ligand>
</feature>
<protein>
    <recommendedName>
        <fullName>Copper-exporting P-type ATPase</fullName>
        <ecNumber>7.2.2.8</ecNumber>
    </recommendedName>
    <alternativeName>
        <fullName>Copper-exporting P-type ATPase A</fullName>
    </alternativeName>
    <alternativeName>
        <fullName>Cu(+)-exporting ATPase</fullName>
    </alternativeName>
</protein>
<dbReference type="EC" id="7.2.2.8"/>
<dbReference type="EMBL" id="CP000029">
    <property type="protein sequence ID" value="AAW53023.1"/>
    <property type="molecule type" value="Genomic_DNA"/>
</dbReference>
<dbReference type="RefSeq" id="WP_001832365.1">
    <property type="nucleotide sequence ID" value="NC_002976.3"/>
</dbReference>
<dbReference type="SMR" id="Q5HL56"/>
<dbReference type="STRING" id="176279.SERP2131"/>
<dbReference type="KEGG" id="ser:SERP2131"/>
<dbReference type="eggNOG" id="COG2217">
    <property type="taxonomic scope" value="Bacteria"/>
</dbReference>
<dbReference type="HOGENOM" id="CLU_001771_0_3_9"/>
<dbReference type="Proteomes" id="UP000000531">
    <property type="component" value="Chromosome"/>
</dbReference>
<dbReference type="GO" id="GO:0005886">
    <property type="term" value="C:plasma membrane"/>
    <property type="evidence" value="ECO:0007669"/>
    <property type="project" value="UniProtKB-SubCell"/>
</dbReference>
<dbReference type="GO" id="GO:0005524">
    <property type="term" value="F:ATP binding"/>
    <property type="evidence" value="ECO:0007669"/>
    <property type="project" value="UniProtKB-KW"/>
</dbReference>
<dbReference type="GO" id="GO:0016887">
    <property type="term" value="F:ATP hydrolysis activity"/>
    <property type="evidence" value="ECO:0007669"/>
    <property type="project" value="InterPro"/>
</dbReference>
<dbReference type="GO" id="GO:0005507">
    <property type="term" value="F:copper ion binding"/>
    <property type="evidence" value="ECO:0007669"/>
    <property type="project" value="InterPro"/>
</dbReference>
<dbReference type="GO" id="GO:0043682">
    <property type="term" value="F:P-type divalent copper transporter activity"/>
    <property type="evidence" value="ECO:0007669"/>
    <property type="project" value="TreeGrafter"/>
</dbReference>
<dbReference type="GO" id="GO:0140581">
    <property type="term" value="F:P-type monovalent copper transporter activity"/>
    <property type="evidence" value="ECO:0007669"/>
    <property type="project" value="UniProtKB-EC"/>
</dbReference>
<dbReference type="GO" id="GO:0055070">
    <property type="term" value="P:copper ion homeostasis"/>
    <property type="evidence" value="ECO:0007669"/>
    <property type="project" value="TreeGrafter"/>
</dbReference>
<dbReference type="CDD" id="cd00371">
    <property type="entry name" value="HMA"/>
    <property type="match status" value="2"/>
</dbReference>
<dbReference type="CDD" id="cd02094">
    <property type="entry name" value="P-type_ATPase_Cu-like"/>
    <property type="match status" value="1"/>
</dbReference>
<dbReference type="FunFam" id="2.70.150.10:FF:000020">
    <property type="entry name" value="Copper-exporting P-type ATPase A"/>
    <property type="match status" value="1"/>
</dbReference>
<dbReference type="FunFam" id="3.30.70.100:FF:000005">
    <property type="entry name" value="Copper-exporting P-type ATPase A"/>
    <property type="match status" value="2"/>
</dbReference>
<dbReference type="FunFam" id="3.40.50.1000:FF:000144">
    <property type="entry name" value="copper-transporting ATPase 1 isoform X2"/>
    <property type="match status" value="1"/>
</dbReference>
<dbReference type="Gene3D" id="3.30.70.100">
    <property type="match status" value="2"/>
</dbReference>
<dbReference type="Gene3D" id="3.40.1110.10">
    <property type="entry name" value="Calcium-transporting ATPase, cytoplasmic domain N"/>
    <property type="match status" value="1"/>
</dbReference>
<dbReference type="Gene3D" id="2.70.150.10">
    <property type="entry name" value="Calcium-transporting ATPase, cytoplasmic transduction domain A"/>
    <property type="match status" value="1"/>
</dbReference>
<dbReference type="Gene3D" id="3.40.50.1000">
    <property type="entry name" value="HAD superfamily/HAD-like"/>
    <property type="match status" value="1"/>
</dbReference>
<dbReference type="InterPro" id="IPR023299">
    <property type="entry name" value="ATPase_P-typ_cyto_dom_N"/>
</dbReference>
<dbReference type="InterPro" id="IPR018303">
    <property type="entry name" value="ATPase_P-typ_P_site"/>
</dbReference>
<dbReference type="InterPro" id="IPR023298">
    <property type="entry name" value="ATPase_P-typ_TM_dom_sf"/>
</dbReference>
<dbReference type="InterPro" id="IPR008250">
    <property type="entry name" value="ATPase_P-typ_transduc_dom_A_sf"/>
</dbReference>
<dbReference type="InterPro" id="IPR036412">
    <property type="entry name" value="HAD-like_sf"/>
</dbReference>
<dbReference type="InterPro" id="IPR023214">
    <property type="entry name" value="HAD_sf"/>
</dbReference>
<dbReference type="InterPro" id="IPR017969">
    <property type="entry name" value="Heavy-metal-associated_CS"/>
</dbReference>
<dbReference type="InterPro" id="IPR006122">
    <property type="entry name" value="HMA_Cu_ion-bd"/>
</dbReference>
<dbReference type="InterPro" id="IPR006121">
    <property type="entry name" value="HMA_dom"/>
</dbReference>
<dbReference type="InterPro" id="IPR036163">
    <property type="entry name" value="HMA_dom_sf"/>
</dbReference>
<dbReference type="InterPro" id="IPR027256">
    <property type="entry name" value="P-typ_ATPase_IB"/>
</dbReference>
<dbReference type="InterPro" id="IPR001757">
    <property type="entry name" value="P_typ_ATPase"/>
</dbReference>
<dbReference type="InterPro" id="IPR044492">
    <property type="entry name" value="P_typ_ATPase_HD_dom"/>
</dbReference>
<dbReference type="NCBIfam" id="TIGR01511">
    <property type="entry name" value="ATPase-IB1_Cu"/>
    <property type="match status" value="1"/>
</dbReference>
<dbReference type="NCBIfam" id="TIGR01525">
    <property type="entry name" value="ATPase-IB_hvy"/>
    <property type="match status" value="1"/>
</dbReference>
<dbReference type="NCBIfam" id="TIGR01494">
    <property type="entry name" value="ATPase_P-type"/>
    <property type="match status" value="1"/>
</dbReference>
<dbReference type="NCBIfam" id="TIGR00003">
    <property type="entry name" value="copper ion binding protein"/>
    <property type="match status" value="1"/>
</dbReference>
<dbReference type="PANTHER" id="PTHR43520">
    <property type="entry name" value="ATP7, ISOFORM B"/>
    <property type="match status" value="1"/>
</dbReference>
<dbReference type="PANTHER" id="PTHR43520:SF8">
    <property type="entry name" value="P-TYPE CU(+) TRANSPORTER"/>
    <property type="match status" value="1"/>
</dbReference>
<dbReference type="Pfam" id="PF00122">
    <property type="entry name" value="E1-E2_ATPase"/>
    <property type="match status" value="1"/>
</dbReference>
<dbReference type="Pfam" id="PF00403">
    <property type="entry name" value="HMA"/>
    <property type="match status" value="2"/>
</dbReference>
<dbReference type="Pfam" id="PF00702">
    <property type="entry name" value="Hydrolase"/>
    <property type="match status" value="1"/>
</dbReference>
<dbReference type="PRINTS" id="PR00119">
    <property type="entry name" value="CATATPASE"/>
</dbReference>
<dbReference type="PRINTS" id="PR00120">
    <property type="entry name" value="HATPASE"/>
</dbReference>
<dbReference type="SFLD" id="SFLDS00003">
    <property type="entry name" value="Haloacid_Dehalogenase"/>
    <property type="match status" value="1"/>
</dbReference>
<dbReference type="SFLD" id="SFLDF00027">
    <property type="entry name" value="p-type_atpase"/>
    <property type="match status" value="1"/>
</dbReference>
<dbReference type="SUPFAM" id="SSF81653">
    <property type="entry name" value="Calcium ATPase, transduction domain A"/>
    <property type="match status" value="1"/>
</dbReference>
<dbReference type="SUPFAM" id="SSF81665">
    <property type="entry name" value="Calcium ATPase, transmembrane domain M"/>
    <property type="match status" value="1"/>
</dbReference>
<dbReference type="SUPFAM" id="SSF56784">
    <property type="entry name" value="HAD-like"/>
    <property type="match status" value="1"/>
</dbReference>
<dbReference type="SUPFAM" id="SSF55008">
    <property type="entry name" value="HMA, heavy metal-associated domain"/>
    <property type="match status" value="2"/>
</dbReference>
<dbReference type="PROSITE" id="PS00154">
    <property type="entry name" value="ATPASE_E1_E2"/>
    <property type="match status" value="1"/>
</dbReference>
<dbReference type="PROSITE" id="PS01047">
    <property type="entry name" value="HMA_1"/>
    <property type="match status" value="2"/>
</dbReference>
<dbReference type="PROSITE" id="PS50846">
    <property type="entry name" value="HMA_2"/>
    <property type="match status" value="2"/>
</dbReference>
<comment type="function">
    <text evidence="1">Involved in copper export.</text>
</comment>
<comment type="catalytic activity">
    <reaction>
        <text>Cu(+)(in) + ATP + H2O = Cu(+)(out) + ADP + phosphate + H(+)</text>
        <dbReference type="Rhea" id="RHEA:25792"/>
        <dbReference type="ChEBI" id="CHEBI:15377"/>
        <dbReference type="ChEBI" id="CHEBI:15378"/>
        <dbReference type="ChEBI" id="CHEBI:30616"/>
        <dbReference type="ChEBI" id="CHEBI:43474"/>
        <dbReference type="ChEBI" id="CHEBI:49552"/>
        <dbReference type="ChEBI" id="CHEBI:456216"/>
        <dbReference type="EC" id="7.2.2.8"/>
    </reaction>
</comment>
<comment type="subcellular location">
    <subcellularLocation>
        <location evidence="1">Cell membrane</location>
        <topology evidence="1">Multi-pass membrane protein</topology>
    </subcellularLocation>
</comment>
<comment type="similarity">
    <text evidence="4">Belongs to the cation transport ATPase (P-type) (TC 3.A.3) family. Type IB subfamily.</text>
</comment>
<organism>
    <name type="scientific">Staphylococcus epidermidis (strain ATCC 35984 / DSM 28319 / BCRC 17069 / CCUG 31568 / BM 3577 / RP62A)</name>
    <dbReference type="NCBI Taxonomy" id="176279"/>
    <lineage>
        <taxon>Bacteria</taxon>
        <taxon>Bacillati</taxon>
        <taxon>Bacillota</taxon>
        <taxon>Bacilli</taxon>
        <taxon>Bacillales</taxon>
        <taxon>Staphylococcaceae</taxon>
        <taxon>Staphylococcus</taxon>
    </lineage>
</organism>
<proteinExistence type="inferred from homology"/>